<accession>Q6N5G6</accession>
<feature type="chain" id="PRO_0000209052" description="Probable potassium transport system protein Kup 2">
    <location>
        <begin position="1"/>
        <end position="634"/>
    </location>
</feature>
<feature type="transmembrane region" description="Helical" evidence="1">
    <location>
        <begin position="20"/>
        <end position="40"/>
    </location>
</feature>
<feature type="transmembrane region" description="Helical" evidence="1">
    <location>
        <begin position="64"/>
        <end position="84"/>
    </location>
</feature>
<feature type="transmembrane region" description="Helical" evidence="1">
    <location>
        <begin position="110"/>
        <end position="130"/>
    </location>
</feature>
<feature type="transmembrane region" description="Helical" evidence="1">
    <location>
        <begin position="148"/>
        <end position="168"/>
    </location>
</feature>
<feature type="transmembrane region" description="Helical" evidence="1">
    <location>
        <begin position="174"/>
        <end position="194"/>
    </location>
</feature>
<feature type="transmembrane region" description="Helical" evidence="1">
    <location>
        <begin position="224"/>
        <end position="244"/>
    </location>
</feature>
<feature type="transmembrane region" description="Helical" evidence="1">
    <location>
        <begin position="258"/>
        <end position="278"/>
    </location>
</feature>
<feature type="transmembrane region" description="Helical" evidence="1">
    <location>
        <begin position="290"/>
        <end position="310"/>
    </location>
</feature>
<feature type="transmembrane region" description="Helical" evidence="1">
    <location>
        <begin position="348"/>
        <end position="368"/>
    </location>
</feature>
<feature type="transmembrane region" description="Helical" evidence="1">
    <location>
        <begin position="377"/>
        <end position="397"/>
    </location>
</feature>
<feature type="transmembrane region" description="Helical" evidence="1">
    <location>
        <begin position="405"/>
        <end position="425"/>
    </location>
</feature>
<feature type="transmembrane region" description="Helical" evidence="1">
    <location>
        <begin position="430"/>
        <end position="450"/>
    </location>
</feature>
<keyword id="KW-0997">Cell inner membrane</keyword>
<keyword id="KW-1003">Cell membrane</keyword>
<keyword id="KW-0406">Ion transport</keyword>
<keyword id="KW-0472">Membrane</keyword>
<keyword id="KW-0630">Potassium</keyword>
<keyword id="KW-0633">Potassium transport</keyword>
<keyword id="KW-0769">Symport</keyword>
<keyword id="KW-0812">Transmembrane</keyword>
<keyword id="KW-1133">Transmembrane helix</keyword>
<keyword id="KW-0813">Transport</keyword>
<gene>
    <name evidence="1" type="primary">kup2</name>
    <name type="ordered locus">RPA3008</name>
</gene>
<organism>
    <name type="scientific">Rhodopseudomonas palustris (strain ATCC BAA-98 / CGA009)</name>
    <dbReference type="NCBI Taxonomy" id="258594"/>
    <lineage>
        <taxon>Bacteria</taxon>
        <taxon>Pseudomonadati</taxon>
        <taxon>Pseudomonadota</taxon>
        <taxon>Alphaproteobacteria</taxon>
        <taxon>Hyphomicrobiales</taxon>
        <taxon>Nitrobacteraceae</taxon>
        <taxon>Rhodopseudomonas</taxon>
    </lineage>
</organism>
<dbReference type="EMBL" id="BX572602">
    <property type="protein sequence ID" value="CAE28449.1"/>
    <property type="molecule type" value="Genomic_DNA"/>
</dbReference>
<dbReference type="RefSeq" id="WP_011158556.1">
    <property type="nucleotide sequence ID" value="NZ_CP116810.1"/>
</dbReference>
<dbReference type="STRING" id="258594.RPA3008"/>
<dbReference type="GeneID" id="66894092"/>
<dbReference type="eggNOG" id="COG3158">
    <property type="taxonomic scope" value="Bacteria"/>
</dbReference>
<dbReference type="HOGENOM" id="CLU_008142_4_2_5"/>
<dbReference type="PhylomeDB" id="Q6N5G6"/>
<dbReference type="GO" id="GO:0005886">
    <property type="term" value="C:plasma membrane"/>
    <property type="evidence" value="ECO:0007669"/>
    <property type="project" value="UniProtKB-SubCell"/>
</dbReference>
<dbReference type="GO" id="GO:0015079">
    <property type="term" value="F:potassium ion transmembrane transporter activity"/>
    <property type="evidence" value="ECO:0007669"/>
    <property type="project" value="UniProtKB-UniRule"/>
</dbReference>
<dbReference type="GO" id="GO:0015293">
    <property type="term" value="F:symporter activity"/>
    <property type="evidence" value="ECO:0007669"/>
    <property type="project" value="UniProtKB-UniRule"/>
</dbReference>
<dbReference type="HAMAP" id="MF_01522">
    <property type="entry name" value="Kup"/>
    <property type="match status" value="1"/>
</dbReference>
<dbReference type="InterPro" id="IPR003855">
    <property type="entry name" value="K+_transporter"/>
</dbReference>
<dbReference type="InterPro" id="IPR053952">
    <property type="entry name" value="K_trans_C"/>
</dbReference>
<dbReference type="InterPro" id="IPR053951">
    <property type="entry name" value="K_trans_N"/>
</dbReference>
<dbReference type="InterPro" id="IPR023051">
    <property type="entry name" value="Kup"/>
</dbReference>
<dbReference type="PANTHER" id="PTHR30540:SF79">
    <property type="entry name" value="LOW AFFINITY POTASSIUM TRANSPORT SYSTEM PROTEIN KUP"/>
    <property type="match status" value="1"/>
</dbReference>
<dbReference type="PANTHER" id="PTHR30540">
    <property type="entry name" value="OSMOTIC STRESS POTASSIUM TRANSPORTER"/>
    <property type="match status" value="1"/>
</dbReference>
<dbReference type="Pfam" id="PF02705">
    <property type="entry name" value="K_trans"/>
    <property type="match status" value="1"/>
</dbReference>
<dbReference type="Pfam" id="PF22776">
    <property type="entry name" value="K_trans_C"/>
    <property type="match status" value="1"/>
</dbReference>
<name>KUP2_RHOPA</name>
<evidence type="ECO:0000255" key="1">
    <source>
        <dbReference type="HAMAP-Rule" id="MF_01522"/>
    </source>
</evidence>
<protein>
    <recommendedName>
        <fullName evidence="1">Probable potassium transport system protein Kup 2</fullName>
    </recommendedName>
</protein>
<reference key="1">
    <citation type="journal article" date="2004" name="Nat. Biotechnol.">
        <title>Complete genome sequence of the metabolically versatile photosynthetic bacterium Rhodopseudomonas palustris.</title>
        <authorList>
            <person name="Larimer F.W."/>
            <person name="Chain P."/>
            <person name="Hauser L."/>
            <person name="Lamerdin J.E."/>
            <person name="Malfatti S."/>
            <person name="Do L."/>
            <person name="Land M.L."/>
            <person name="Pelletier D.A."/>
            <person name="Beatty J.T."/>
            <person name="Lang A.S."/>
            <person name="Tabita F.R."/>
            <person name="Gibson J.L."/>
            <person name="Hanson T.E."/>
            <person name="Bobst C."/>
            <person name="Torres y Torres J.L."/>
            <person name="Peres C."/>
            <person name="Harrison F.H."/>
            <person name="Gibson J."/>
            <person name="Harwood C.S."/>
        </authorList>
    </citation>
    <scope>NUCLEOTIDE SEQUENCE [LARGE SCALE GENOMIC DNA]</scope>
    <source>
        <strain>ATCC BAA-98 / CGA009</strain>
    </source>
</reference>
<sequence>MTEAVSDVTLAKASPKPNSFWTLALGSIGVVYGDIGTSPLYALKESLTAASAGGALTQEMIFGVLSLMLWTLLIIVTLKYVLLIMRADNHGEGGTLTLMALLQSVMRRRFAAISLLGMAGAALFYGDAIITPAISVLSAVEGLKLVAPGFDPYILPLSMAILVGLFLVQSWGTAAVATWFGPLMLIWFGLMAVAGTANLMDNLHILGAVNPIYGIDFLLHHGHAGLLALGAVFLTVTGAEALYADMGHFGRRPIQVAWLVLVFPALALCYLGQGAMLLSHPERLENPFFLLFPDWALLPMVWIATGATIIASQAVISGAYSLTQQAIQLGLLPRMEIRRTSETEKGQIYIPRANWLLLIAVLYLVFAFKSSSALASAYGIAVTGTMVLTSIMAFFVMRKCWHWPAAVATAIIVPFLIIDLIFLMANLLKIVDGGWIPLMIGVGLMGVMVTWRRGSKIVARKTVRDEIDLNDFIASISVSSSISRVRGTAVFLTGNPNSTPTSLMHNLKHNKVLHEKNVILRVATEDVPRVSEDERLSYEPVNDSFAKITIRFGYMETPDVPKALVACRPLGFAFDMMSTSFFLSRRVIRQANPSEMPRWQGLLFVNMAKWSDDASLYFKIPTGRAVEVGMQITV</sequence>
<proteinExistence type="inferred from homology"/>
<comment type="function">
    <text evidence="1">Transport of potassium into the cell. Likely operates as a K(+):H(+) symporter.</text>
</comment>
<comment type="catalytic activity">
    <reaction evidence="1">
        <text>K(+)(in) + H(+)(in) = K(+)(out) + H(+)(out)</text>
        <dbReference type="Rhea" id="RHEA:28490"/>
        <dbReference type="ChEBI" id="CHEBI:15378"/>
        <dbReference type="ChEBI" id="CHEBI:29103"/>
    </reaction>
    <physiologicalReaction direction="right-to-left" evidence="1">
        <dbReference type="Rhea" id="RHEA:28492"/>
    </physiologicalReaction>
</comment>
<comment type="subcellular location">
    <subcellularLocation>
        <location evidence="1">Cell inner membrane</location>
        <topology evidence="1">Multi-pass membrane protein</topology>
    </subcellularLocation>
</comment>
<comment type="similarity">
    <text evidence="1">Belongs to the HAK/KUP transporter (TC 2.A.72) family.</text>
</comment>